<comment type="function">
    <text evidence="1">Involved in the gluconeogenesis. Catalyzes the conversion of oxaloacetate (OAA) to phosphoenolpyruvate (PEP) through direct phosphoryl transfer between the nucleoside triphosphate and OAA.</text>
</comment>
<comment type="catalytic activity">
    <reaction evidence="1">
        <text>oxaloacetate + ATP = phosphoenolpyruvate + ADP + CO2</text>
        <dbReference type="Rhea" id="RHEA:18617"/>
        <dbReference type="ChEBI" id="CHEBI:16452"/>
        <dbReference type="ChEBI" id="CHEBI:16526"/>
        <dbReference type="ChEBI" id="CHEBI:30616"/>
        <dbReference type="ChEBI" id="CHEBI:58702"/>
        <dbReference type="ChEBI" id="CHEBI:456216"/>
        <dbReference type="EC" id="4.1.1.49"/>
    </reaction>
</comment>
<comment type="cofactor">
    <cofactor evidence="1">
        <name>Mn(2+)</name>
        <dbReference type="ChEBI" id="CHEBI:29035"/>
    </cofactor>
    <text evidence="1">Binds 1 Mn(2+) ion per subunit.</text>
</comment>
<comment type="pathway">
    <text evidence="1">Carbohydrate biosynthesis; gluconeogenesis.</text>
</comment>
<comment type="subcellular location">
    <subcellularLocation>
        <location evidence="1">Cytoplasm</location>
    </subcellularLocation>
</comment>
<comment type="similarity">
    <text evidence="1">Belongs to the phosphoenolpyruvate carboxykinase (ATP) family.</text>
</comment>
<name>PCKA_STAA1</name>
<accession>A7X3N3</accession>
<organism>
    <name type="scientific">Staphylococcus aureus (strain Mu3 / ATCC 700698)</name>
    <dbReference type="NCBI Taxonomy" id="418127"/>
    <lineage>
        <taxon>Bacteria</taxon>
        <taxon>Bacillati</taxon>
        <taxon>Bacillota</taxon>
        <taxon>Bacilli</taxon>
        <taxon>Bacillales</taxon>
        <taxon>Staphylococcaceae</taxon>
        <taxon>Staphylococcus</taxon>
    </lineage>
</organism>
<protein>
    <recommendedName>
        <fullName evidence="1">Phosphoenolpyruvate carboxykinase (ATP)</fullName>
        <shortName evidence="1">PCK</shortName>
        <shortName evidence="1">PEP carboxykinase</shortName>
        <shortName evidence="1">PEPCK</shortName>
        <ecNumber evidence="1">4.1.1.49</ecNumber>
    </recommendedName>
</protein>
<evidence type="ECO:0000255" key="1">
    <source>
        <dbReference type="HAMAP-Rule" id="MF_00453"/>
    </source>
</evidence>
<reference key="1">
    <citation type="journal article" date="2008" name="Antimicrob. Agents Chemother.">
        <title>Mutated response regulator graR is responsible for phenotypic conversion of Staphylococcus aureus from heterogeneous vancomycin-intermediate resistance to vancomycin-intermediate resistance.</title>
        <authorList>
            <person name="Neoh H.-M."/>
            <person name="Cui L."/>
            <person name="Yuzawa H."/>
            <person name="Takeuchi F."/>
            <person name="Matsuo M."/>
            <person name="Hiramatsu K."/>
        </authorList>
    </citation>
    <scope>NUCLEOTIDE SEQUENCE [LARGE SCALE GENOMIC DNA]</scope>
    <source>
        <strain>Mu3 / ATCC 700698</strain>
    </source>
</reference>
<gene>
    <name evidence="1" type="primary">pckA</name>
    <name type="ordered locus">SAHV_1776</name>
</gene>
<dbReference type="EC" id="4.1.1.49" evidence="1"/>
<dbReference type="EMBL" id="AP009324">
    <property type="protein sequence ID" value="BAF78659.1"/>
    <property type="molecule type" value="Genomic_DNA"/>
</dbReference>
<dbReference type="RefSeq" id="WP_000109906.1">
    <property type="nucleotide sequence ID" value="NZ_CTYB01000087.1"/>
</dbReference>
<dbReference type="SMR" id="A7X3N3"/>
<dbReference type="KEGG" id="saw:SAHV_1776"/>
<dbReference type="HOGENOM" id="CLU_018247_0_1_9"/>
<dbReference type="UniPathway" id="UPA00138"/>
<dbReference type="GO" id="GO:0005829">
    <property type="term" value="C:cytosol"/>
    <property type="evidence" value="ECO:0007669"/>
    <property type="project" value="TreeGrafter"/>
</dbReference>
<dbReference type="GO" id="GO:0005524">
    <property type="term" value="F:ATP binding"/>
    <property type="evidence" value="ECO:0007669"/>
    <property type="project" value="UniProtKB-UniRule"/>
</dbReference>
<dbReference type="GO" id="GO:0046872">
    <property type="term" value="F:metal ion binding"/>
    <property type="evidence" value="ECO:0007669"/>
    <property type="project" value="UniProtKB-KW"/>
</dbReference>
<dbReference type="GO" id="GO:0004612">
    <property type="term" value="F:phosphoenolpyruvate carboxykinase (ATP) activity"/>
    <property type="evidence" value="ECO:0007669"/>
    <property type="project" value="UniProtKB-UniRule"/>
</dbReference>
<dbReference type="GO" id="GO:0006094">
    <property type="term" value="P:gluconeogenesis"/>
    <property type="evidence" value="ECO:0007669"/>
    <property type="project" value="UniProtKB-UniRule"/>
</dbReference>
<dbReference type="CDD" id="cd00484">
    <property type="entry name" value="PEPCK_ATP"/>
    <property type="match status" value="1"/>
</dbReference>
<dbReference type="FunFam" id="2.170.8.10:FF:000001">
    <property type="entry name" value="Phosphoenolpyruvate carboxykinase (ATP)"/>
    <property type="match status" value="1"/>
</dbReference>
<dbReference type="FunFam" id="3.40.449.10:FF:000001">
    <property type="entry name" value="Phosphoenolpyruvate carboxykinase (ATP)"/>
    <property type="match status" value="1"/>
</dbReference>
<dbReference type="Gene3D" id="3.90.228.20">
    <property type="match status" value="1"/>
</dbReference>
<dbReference type="Gene3D" id="3.40.449.10">
    <property type="entry name" value="Phosphoenolpyruvate Carboxykinase, domain 1"/>
    <property type="match status" value="1"/>
</dbReference>
<dbReference type="Gene3D" id="2.170.8.10">
    <property type="entry name" value="Phosphoenolpyruvate Carboxykinase, domain 2"/>
    <property type="match status" value="1"/>
</dbReference>
<dbReference type="HAMAP" id="MF_00453">
    <property type="entry name" value="PEPCK_ATP"/>
    <property type="match status" value="1"/>
</dbReference>
<dbReference type="InterPro" id="IPR001272">
    <property type="entry name" value="PEP_carboxykinase_ATP"/>
</dbReference>
<dbReference type="InterPro" id="IPR013035">
    <property type="entry name" value="PEP_carboxykinase_C"/>
</dbReference>
<dbReference type="InterPro" id="IPR008210">
    <property type="entry name" value="PEP_carboxykinase_N"/>
</dbReference>
<dbReference type="InterPro" id="IPR015994">
    <property type="entry name" value="PEPCK_ATP_CS"/>
</dbReference>
<dbReference type="NCBIfam" id="TIGR00224">
    <property type="entry name" value="pckA"/>
    <property type="match status" value="1"/>
</dbReference>
<dbReference type="NCBIfam" id="NF006820">
    <property type="entry name" value="PRK09344.1-2"/>
    <property type="match status" value="1"/>
</dbReference>
<dbReference type="NCBIfam" id="NF006821">
    <property type="entry name" value="PRK09344.1-3"/>
    <property type="match status" value="1"/>
</dbReference>
<dbReference type="PANTHER" id="PTHR30031:SF0">
    <property type="entry name" value="PHOSPHOENOLPYRUVATE CARBOXYKINASE (ATP)"/>
    <property type="match status" value="1"/>
</dbReference>
<dbReference type="PANTHER" id="PTHR30031">
    <property type="entry name" value="PHOSPHOENOLPYRUVATE CARBOXYKINASE ATP"/>
    <property type="match status" value="1"/>
</dbReference>
<dbReference type="Pfam" id="PF01293">
    <property type="entry name" value="PEPCK_ATP"/>
    <property type="match status" value="1"/>
</dbReference>
<dbReference type="PIRSF" id="PIRSF006294">
    <property type="entry name" value="PEP_crbxkin"/>
    <property type="match status" value="1"/>
</dbReference>
<dbReference type="SUPFAM" id="SSF68923">
    <property type="entry name" value="PEP carboxykinase N-terminal domain"/>
    <property type="match status" value="1"/>
</dbReference>
<dbReference type="SUPFAM" id="SSF53795">
    <property type="entry name" value="PEP carboxykinase-like"/>
    <property type="match status" value="1"/>
</dbReference>
<dbReference type="PROSITE" id="PS00532">
    <property type="entry name" value="PEPCK_ATP"/>
    <property type="match status" value="1"/>
</dbReference>
<sequence length="530" mass="59377">MSVDTYTETTKIDKLLKKPTSHFQLSTTQLYNKILDNNEGVLTELGAVNASTGKYTGRSPKDKFFVSEPSYRDNIDWGEINQPIDEETFLKLYHKVLDYLDKKDELYVFKGYAGSDKDTMLKLTVINELAWHNLFAKNMFIRPESKEEATKIKPNFTIVSAPHFKADPEVDGTKSETFVIISFKHKVILIGGTEYAGEMKKGIFSVMNYLLPMQDIMSMHCSANVGEKGDVALFFGLSGTGKTTLSADPHRKLIGDDEHGWNKNGVFNIEGGCYAKAINLSKEKEPQIFDAIKYGAILENTVVAEDGSVDFEDNRYTENTRAAYPINHIDNIVVPSKAAHPNTIIFLTADAFGVIPPISKLNKDQAMYHFLSGFTSKLAGTERGVTEPEPSFSTCFGAPFFPLHPTVYADLLGELIDLHDVDVYLVNTGWTGGKYGVGRRISLHYTRQMVNQAISGKLKNAEYTKDSTFGLSIPVEIEDVPKTILNPINAWSDKEKYKAQAEDLIQRFEKNFEKFGEKVEHIAEKGSFNK</sequence>
<keyword id="KW-0067">ATP-binding</keyword>
<keyword id="KW-0963">Cytoplasm</keyword>
<keyword id="KW-0210">Decarboxylase</keyword>
<keyword id="KW-0312">Gluconeogenesis</keyword>
<keyword id="KW-0456">Lyase</keyword>
<keyword id="KW-0464">Manganese</keyword>
<keyword id="KW-0479">Metal-binding</keyword>
<keyword id="KW-0547">Nucleotide-binding</keyword>
<feature type="chain" id="PRO_1000026362" description="Phosphoenolpyruvate carboxykinase (ATP)">
    <location>
        <begin position="1"/>
        <end position="530"/>
    </location>
</feature>
<feature type="binding site" evidence="1">
    <location>
        <position position="58"/>
    </location>
    <ligand>
        <name>substrate</name>
    </ligand>
</feature>
<feature type="binding site" evidence="1">
    <location>
        <position position="195"/>
    </location>
    <ligand>
        <name>substrate</name>
    </ligand>
</feature>
<feature type="binding site" evidence="1">
    <location>
        <position position="201"/>
    </location>
    <ligand>
        <name>ATP</name>
        <dbReference type="ChEBI" id="CHEBI:30616"/>
    </ligand>
</feature>
<feature type="binding site" evidence="1">
    <location>
        <position position="201"/>
    </location>
    <ligand>
        <name>Mn(2+)</name>
        <dbReference type="ChEBI" id="CHEBI:29035"/>
    </ligand>
</feature>
<feature type="binding site" evidence="1">
    <location>
        <position position="201"/>
    </location>
    <ligand>
        <name>substrate</name>
    </ligand>
</feature>
<feature type="binding site" evidence="1">
    <location>
        <position position="220"/>
    </location>
    <ligand>
        <name>ATP</name>
        <dbReference type="ChEBI" id="CHEBI:30616"/>
    </ligand>
</feature>
<feature type="binding site" evidence="1">
    <location>
        <position position="220"/>
    </location>
    <ligand>
        <name>Mn(2+)</name>
        <dbReference type="ChEBI" id="CHEBI:29035"/>
    </ligand>
</feature>
<feature type="binding site" evidence="1">
    <location>
        <begin position="236"/>
        <end position="244"/>
    </location>
    <ligand>
        <name>ATP</name>
        <dbReference type="ChEBI" id="CHEBI:30616"/>
    </ligand>
</feature>
<feature type="binding site" evidence="1">
    <location>
        <position position="257"/>
    </location>
    <ligand>
        <name>Mn(2+)</name>
        <dbReference type="ChEBI" id="CHEBI:29035"/>
    </ligand>
</feature>
<feature type="binding site" evidence="1">
    <location>
        <position position="285"/>
    </location>
    <ligand>
        <name>ATP</name>
        <dbReference type="ChEBI" id="CHEBI:30616"/>
    </ligand>
</feature>
<feature type="binding site" evidence="1">
    <location>
        <position position="321"/>
    </location>
    <ligand>
        <name>ATP</name>
        <dbReference type="ChEBI" id="CHEBI:30616"/>
    </ligand>
</feature>
<feature type="binding site" evidence="1">
    <location>
        <position position="321"/>
    </location>
    <ligand>
        <name>substrate</name>
    </ligand>
</feature>
<feature type="binding site" evidence="1">
    <location>
        <begin position="440"/>
        <end position="441"/>
    </location>
    <ligand>
        <name>ATP</name>
        <dbReference type="ChEBI" id="CHEBI:30616"/>
    </ligand>
</feature>
<feature type="binding site" evidence="1">
    <location>
        <position position="446"/>
    </location>
    <ligand>
        <name>ATP</name>
        <dbReference type="ChEBI" id="CHEBI:30616"/>
    </ligand>
</feature>
<proteinExistence type="inferred from homology"/>